<accession>B6J2D8</accession>
<evidence type="ECO:0000255" key="1">
    <source>
        <dbReference type="HAMAP-Rule" id="MF_01346"/>
    </source>
</evidence>
<name>ATPA_COXB2</name>
<keyword id="KW-0066">ATP synthesis</keyword>
<keyword id="KW-0067">ATP-binding</keyword>
<keyword id="KW-0997">Cell inner membrane</keyword>
<keyword id="KW-1003">Cell membrane</keyword>
<keyword id="KW-0139">CF(1)</keyword>
<keyword id="KW-0375">Hydrogen ion transport</keyword>
<keyword id="KW-0406">Ion transport</keyword>
<keyword id="KW-0472">Membrane</keyword>
<keyword id="KW-0547">Nucleotide-binding</keyword>
<keyword id="KW-1278">Translocase</keyword>
<keyword id="KW-0813">Transport</keyword>
<dbReference type="EC" id="7.1.2.2" evidence="1"/>
<dbReference type="EMBL" id="CP001019">
    <property type="protein sequence ID" value="ACJ17512.1"/>
    <property type="molecule type" value="Genomic_DNA"/>
</dbReference>
<dbReference type="RefSeq" id="WP_005770035.1">
    <property type="nucleotide sequence ID" value="NC_011527.1"/>
</dbReference>
<dbReference type="SMR" id="B6J2D8"/>
<dbReference type="KEGG" id="cbg:CbuG_0054"/>
<dbReference type="HOGENOM" id="CLU_010091_2_1_6"/>
<dbReference type="GO" id="GO:0005886">
    <property type="term" value="C:plasma membrane"/>
    <property type="evidence" value="ECO:0007669"/>
    <property type="project" value="UniProtKB-SubCell"/>
</dbReference>
<dbReference type="GO" id="GO:0045259">
    <property type="term" value="C:proton-transporting ATP synthase complex"/>
    <property type="evidence" value="ECO:0007669"/>
    <property type="project" value="UniProtKB-KW"/>
</dbReference>
<dbReference type="GO" id="GO:0043531">
    <property type="term" value="F:ADP binding"/>
    <property type="evidence" value="ECO:0007669"/>
    <property type="project" value="TreeGrafter"/>
</dbReference>
<dbReference type="GO" id="GO:0005524">
    <property type="term" value="F:ATP binding"/>
    <property type="evidence" value="ECO:0007669"/>
    <property type="project" value="UniProtKB-UniRule"/>
</dbReference>
<dbReference type="GO" id="GO:0046933">
    <property type="term" value="F:proton-transporting ATP synthase activity, rotational mechanism"/>
    <property type="evidence" value="ECO:0007669"/>
    <property type="project" value="UniProtKB-UniRule"/>
</dbReference>
<dbReference type="CDD" id="cd18113">
    <property type="entry name" value="ATP-synt_F1_alpha_C"/>
    <property type="match status" value="1"/>
</dbReference>
<dbReference type="CDD" id="cd18116">
    <property type="entry name" value="ATP-synt_F1_alpha_N"/>
    <property type="match status" value="1"/>
</dbReference>
<dbReference type="CDD" id="cd01132">
    <property type="entry name" value="F1-ATPase_alpha_CD"/>
    <property type="match status" value="1"/>
</dbReference>
<dbReference type="FunFam" id="1.20.150.20:FF:000001">
    <property type="entry name" value="ATP synthase subunit alpha"/>
    <property type="match status" value="1"/>
</dbReference>
<dbReference type="FunFam" id="2.40.30.20:FF:000001">
    <property type="entry name" value="ATP synthase subunit alpha"/>
    <property type="match status" value="1"/>
</dbReference>
<dbReference type="FunFam" id="3.40.50.300:FF:000002">
    <property type="entry name" value="ATP synthase subunit alpha"/>
    <property type="match status" value="1"/>
</dbReference>
<dbReference type="Gene3D" id="2.40.30.20">
    <property type="match status" value="1"/>
</dbReference>
<dbReference type="Gene3D" id="1.20.150.20">
    <property type="entry name" value="ATP synthase alpha/beta chain, C-terminal domain"/>
    <property type="match status" value="1"/>
</dbReference>
<dbReference type="Gene3D" id="3.40.50.300">
    <property type="entry name" value="P-loop containing nucleotide triphosphate hydrolases"/>
    <property type="match status" value="1"/>
</dbReference>
<dbReference type="HAMAP" id="MF_01346">
    <property type="entry name" value="ATP_synth_alpha_bact"/>
    <property type="match status" value="1"/>
</dbReference>
<dbReference type="InterPro" id="IPR023366">
    <property type="entry name" value="ATP_synth_asu-like_sf"/>
</dbReference>
<dbReference type="InterPro" id="IPR000793">
    <property type="entry name" value="ATP_synth_asu_C"/>
</dbReference>
<dbReference type="InterPro" id="IPR038376">
    <property type="entry name" value="ATP_synth_asu_C_sf"/>
</dbReference>
<dbReference type="InterPro" id="IPR033732">
    <property type="entry name" value="ATP_synth_F1_a_nt-bd_dom"/>
</dbReference>
<dbReference type="InterPro" id="IPR005294">
    <property type="entry name" value="ATP_synth_F1_asu"/>
</dbReference>
<dbReference type="InterPro" id="IPR020003">
    <property type="entry name" value="ATPase_a/bsu_AS"/>
</dbReference>
<dbReference type="InterPro" id="IPR004100">
    <property type="entry name" value="ATPase_F1/V1/A1_a/bsu_N"/>
</dbReference>
<dbReference type="InterPro" id="IPR036121">
    <property type="entry name" value="ATPase_F1/V1/A1_a/bsu_N_sf"/>
</dbReference>
<dbReference type="InterPro" id="IPR000194">
    <property type="entry name" value="ATPase_F1/V1/A1_a/bsu_nucl-bd"/>
</dbReference>
<dbReference type="InterPro" id="IPR027417">
    <property type="entry name" value="P-loop_NTPase"/>
</dbReference>
<dbReference type="NCBIfam" id="TIGR00962">
    <property type="entry name" value="atpA"/>
    <property type="match status" value="1"/>
</dbReference>
<dbReference type="NCBIfam" id="NF009884">
    <property type="entry name" value="PRK13343.1"/>
    <property type="match status" value="1"/>
</dbReference>
<dbReference type="PANTHER" id="PTHR48082">
    <property type="entry name" value="ATP SYNTHASE SUBUNIT ALPHA, MITOCHONDRIAL"/>
    <property type="match status" value="1"/>
</dbReference>
<dbReference type="PANTHER" id="PTHR48082:SF2">
    <property type="entry name" value="ATP SYNTHASE SUBUNIT ALPHA, MITOCHONDRIAL"/>
    <property type="match status" value="1"/>
</dbReference>
<dbReference type="Pfam" id="PF00006">
    <property type="entry name" value="ATP-synt_ab"/>
    <property type="match status" value="1"/>
</dbReference>
<dbReference type="Pfam" id="PF00306">
    <property type="entry name" value="ATP-synt_ab_C"/>
    <property type="match status" value="1"/>
</dbReference>
<dbReference type="Pfam" id="PF02874">
    <property type="entry name" value="ATP-synt_ab_N"/>
    <property type="match status" value="1"/>
</dbReference>
<dbReference type="PIRSF" id="PIRSF039088">
    <property type="entry name" value="F_ATPase_subunit_alpha"/>
    <property type="match status" value="1"/>
</dbReference>
<dbReference type="SUPFAM" id="SSF47917">
    <property type="entry name" value="C-terminal domain of alpha and beta subunits of F1 ATP synthase"/>
    <property type="match status" value="1"/>
</dbReference>
<dbReference type="SUPFAM" id="SSF50615">
    <property type="entry name" value="N-terminal domain of alpha and beta subunits of F1 ATP synthase"/>
    <property type="match status" value="1"/>
</dbReference>
<dbReference type="SUPFAM" id="SSF52540">
    <property type="entry name" value="P-loop containing nucleoside triphosphate hydrolases"/>
    <property type="match status" value="1"/>
</dbReference>
<dbReference type="PROSITE" id="PS00152">
    <property type="entry name" value="ATPASE_ALPHA_BETA"/>
    <property type="match status" value="1"/>
</dbReference>
<sequence>MSTQLRAAEISDIIESRIEKFGIKAEERTEGTILNIKDGIVRVYGLRDVMFGEMVEFPENTYGLAFNLERDSVGAVVMGPYEHLEEGMTARCTGRILEVPVGEALLGRVVDGLGKPIDGKGPIDTSETSPIEKVAPGVITRKSVDTSLPTGLKSIDAMVPIGRGQRELIIGDRQTGKTAIAIDTIINQKHTGVKCIYVAIGQKQSSVAAVVRKLEEHGAMEHTIVVNASASEAAALQYLAPYAGCTMGEYFRDRGQDALIVYDDLTKQAWAYRQISLLLRRPPGREAYPGDIFYLHSRLLERAAHVNEAYVKEFTKGKVTGKTGSLTALPIIETQAGDVSAFIPTNVISITDGQIYLDVNLFNAGIRPAINAGLSVSRVGGAAQTKIIKKLIGGLRIALAQYRELEAFSQFASDLDEATRKQLEHGQRVMEILKQPQYQPLSVGEMAIIWYVVNNNYLDQVELKKVVDFERSLLSFLRDQHQDLLDEINKNPNYSEKIIEKIKAVVEEFVKTQSY</sequence>
<reference key="1">
    <citation type="journal article" date="2009" name="Infect. Immun.">
        <title>Comparative genomics reveal extensive transposon-mediated genomic plasticity and diversity among potential effector proteins within the genus Coxiella.</title>
        <authorList>
            <person name="Beare P.A."/>
            <person name="Unsworth N."/>
            <person name="Andoh M."/>
            <person name="Voth D.E."/>
            <person name="Omsland A."/>
            <person name="Gilk S.D."/>
            <person name="Williams K.P."/>
            <person name="Sobral B.W."/>
            <person name="Kupko J.J. III"/>
            <person name="Porcella S.F."/>
            <person name="Samuel J.E."/>
            <person name="Heinzen R.A."/>
        </authorList>
    </citation>
    <scope>NUCLEOTIDE SEQUENCE [LARGE SCALE GENOMIC DNA]</scope>
    <source>
        <strain>CbuG_Q212</strain>
    </source>
</reference>
<protein>
    <recommendedName>
        <fullName evidence="1">ATP synthase subunit alpha</fullName>
        <ecNumber evidence="1">7.1.2.2</ecNumber>
    </recommendedName>
    <alternativeName>
        <fullName evidence="1">ATP synthase F1 sector subunit alpha</fullName>
    </alternativeName>
    <alternativeName>
        <fullName evidence="1">F-ATPase subunit alpha</fullName>
    </alternativeName>
</protein>
<organism>
    <name type="scientific">Coxiella burnetii (strain CbuG_Q212)</name>
    <name type="common">Coxiella burnetii (strain Q212)</name>
    <dbReference type="NCBI Taxonomy" id="434923"/>
    <lineage>
        <taxon>Bacteria</taxon>
        <taxon>Pseudomonadati</taxon>
        <taxon>Pseudomonadota</taxon>
        <taxon>Gammaproteobacteria</taxon>
        <taxon>Legionellales</taxon>
        <taxon>Coxiellaceae</taxon>
        <taxon>Coxiella</taxon>
    </lineage>
</organism>
<feature type="chain" id="PRO_1000143362" description="ATP synthase subunit alpha">
    <location>
        <begin position="1"/>
        <end position="515"/>
    </location>
</feature>
<feature type="binding site" evidence="1">
    <location>
        <begin position="171"/>
        <end position="178"/>
    </location>
    <ligand>
        <name>ATP</name>
        <dbReference type="ChEBI" id="CHEBI:30616"/>
    </ligand>
</feature>
<feature type="site" description="Required for activity" evidence="1">
    <location>
        <position position="375"/>
    </location>
</feature>
<comment type="function">
    <text evidence="1">Produces ATP from ADP in the presence of a proton gradient across the membrane. The alpha chain is a regulatory subunit.</text>
</comment>
<comment type="catalytic activity">
    <reaction evidence="1">
        <text>ATP + H2O + 4 H(+)(in) = ADP + phosphate + 5 H(+)(out)</text>
        <dbReference type="Rhea" id="RHEA:57720"/>
        <dbReference type="ChEBI" id="CHEBI:15377"/>
        <dbReference type="ChEBI" id="CHEBI:15378"/>
        <dbReference type="ChEBI" id="CHEBI:30616"/>
        <dbReference type="ChEBI" id="CHEBI:43474"/>
        <dbReference type="ChEBI" id="CHEBI:456216"/>
        <dbReference type="EC" id="7.1.2.2"/>
    </reaction>
</comment>
<comment type="subunit">
    <text evidence="1">F-type ATPases have 2 components, CF(1) - the catalytic core - and CF(0) - the membrane proton channel. CF(1) has five subunits: alpha(3), beta(3), gamma(1), delta(1), epsilon(1). CF(0) has three main subunits: a(1), b(2) and c(9-12). The alpha and beta chains form an alternating ring which encloses part of the gamma chain. CF(1) is attached to CF(0) by a central stalk formed by the gamma and epsilon chains, while a peripheral stalk is formed by the delta and b chains.</text>
</comment>
<comment type="subcellular location">
    <subcellularLocation>
        <location evidence="1">Cell inner membrane</location>
        <topology evidence="1">Peripheral membrane protein</topology>
    </subcellularLocation>
</comment>
<comment type="similarity">
    <text evidence="1">Belongs to the ATPase alpha/beta chains family.</text>
</comment>
<proteinExistence type="inferred from homology"/>
<gene>
    <name evidence="1" type="primary">atpA</name>
    <name type="ordered locus">CbuG_0054</name>
</gene>